<feature type="initiator methionine" description="Removed" evidence="1">
    <location>
        <position position="1"/>
    </location>
</feature>
<feature type="chain" id="PRO_0000190477" description="Ribonucleoside-diphosphate reductase 1 subunit beta">
    <location>
        <begin position="2"/>
        <end position="376"/>
    </location>
</feature>
<feature type="active site" evidence="2">
    <location>
        <position position="123"/>
    </location>
</feature>
<feature type="binding site" evidence="2">
    <location>
        <position position="85"/>
    </location>
    <ligand>
        <name>Fe cation</name>
        <dbReference type="ChEBI" id="CHEBI:24875"/>
        <label>1</label>
    </ligand>
</feature>
<feature type="binding site" evidence="2">
    <location>
        <position position="116"/>
    </location>
    <ligand>
        <name>Fe cation</name>
        <dbReference type="ChEBI" id="CHEBI:24875"/>
        <label>1</label>
    </ligand>
</feature>
<feature type="binding site" evidence="1">
    <location>
        <position position="116"/>
    </location>
    <ligand>
        <name>Fe cation</name>
        <dbReference type="ChEBI" id="CHEBI:24875"/>
        <label>2</label>
    </ligand>
</feature>
<feature type="binding site" evidence="2">
    <location>
        <position position="119"/>
    </location>
    <ligand>
        <name>Fe cation</name>
        <dbReference type="ChEBI" id="CHEBI:24875"/>
        <label>1</label>
    </ligand>
</feature>
<feature type="binding site" evidence="1">
    <location>
        <position position="205"/>
    </location>
    <ligand>
        <name>Fe cation</name>
        <dbReference type="ChEBI" id="CHEBI:24875"/>
        <label>2</label>
    </ligand>
</feature>
<feature type="binding site" evidence="1">
    <location>
        <position position="239"/>
    </location>
    <ligand>
        <name>Fe cation</name>
        <dbReference type="ChEBI" id="CHEBI:24875"/>
        <label>2</label>
    </ligand>
</feature>
<feature type="binding site" evidence="1">
    <location>
        <position position="242"/>
    </location>
    <ligand>
        <name>Fe cation</name>
        <dbReference type="ChEBI" id="CHEBI:24875"/>
        <label>2</label>
    </ligand>
</feature>
<accession>P69925</accession>
<accession>P00453</accession>
<proteinExistence type="inferred from homology"/>
<gene>
    <name type="primary">nrdB</name>
    <name type="synonym">ftsB</name>
    <name type="ordered locus">Z3491</name>
    <name type="ordered locus">ECs3118</name>
</gene>
<protein>
    <recommendedName>
        <fullName>Ribonucleoside-diphosphate reductase 1 subunit beta</fullName>
        <ecNumber>1.17.4.1</ecNumber>
    </recommendedName>
    <alternativeName>
        <fullName>Protein B2</fullName>
    </alternativeName>
    <alternativeName>
        <fullName>Protein R2</fullName>
    </alternativeName>
    <alternativeName>
        <fullName>Ribonucleotide reductase 1</fullName>
    </alternativeName>
</protein>
<name>RIR2_ECO57</name>
<keyword id="KW-0215">Deoxyribonucleotide synthesis</keyword>
<keyword id="KW-0408">Iron</keyword>
<keyword id="KW-0479">Metal-binding</keyword>
<keyword id="KW-0560">Oxidoreductase</keyword>
<keyword id="KW-1185">Reference proteome</keyword>
<reference key="1">
    <citation type="journal article" date="2001" name="Nature">
        <title>Genome sequence of enterohaemorrhagic Escherichia coli O157:H7.</title>
        <authorList>
            <person name="Perna N.T."/>
            <person name="Plunkett G. III"/>
            <person name="Burland V."/>
            <person name="Mau B."/>
            <person name="Glasner J.D."/>
            <person name="Rose D.J."/>
            <person name="Mayhew G.F."/>
            <person name="Evans P.S."/>
            <person name="Gregor J."/>
            <person name="Kirkpatrick H.A."/>
            <person name="Posfai G."/>
            <person name="Hackett J."/>
            <person name="Klink S."/>
            <person name="Boutin A."/>
            <person name="Shao Y."/>
            <person name="Miller L."/>
            <person name="Grotbeck E.J."/>
            <person name="Davis N.W."/>
            <person name="Lim A."/>
            <person name="Dimalanta E.T."/>
            <person name="Potamousis K."/>
            <person name="Apodaca J."/>
            <person name="Anantharaman T.S."/>
            <person name="Lin J."/>
            <person name="Yen G."/>
            <person name="Schwartz D.C."/>
            <person name="Welch R.A."/>
            <person name="Blattner F.R."/>
        </authorList>
    </citation>
    <scope>NUCLEOTIDE SEQUENCE [LARGE SCALE GENOMIC DNA]</scope>
    <source>
        <strain>O157:H7 / EDL933 / ATCC 700927 / EHEC</strain>
    </source>
</reference>
<reference key="2">
    <citation type="journal article" date="2001" name="DNA Res.">
        <title>Complete genome sequence of enterohemorrhagic Escherichia coli O157:H7 and genomic comparison with a laboratory strain K-12.</title>
        <authorList>
            <person name="Hayashi T."/>
            <person name="Makino K."/>
            <person name="Ohnishi M."/>
            <person name="Kurokawa K."/>
            <person name="Ishii K."/>
            <person name="Yokoyama K."/>
            <person name="Han C.-G."/>
            <person name="Ohtsubo E."/>
            <person name="Nakayama K."/>
            <person name="Murata T."/>
            <person name="Tanaka M."/>
            <person name="Tobe T."/>
            <person name="Iida T."/>
            <person name="Takami H."/>
            <person name="Honda T."/>
            <person name="Sasakawa C."/>
            <person name="Ogasawara N."/>
            <person name="Yasunaga T."/>
            <person name="Kuhara S."/>
            <person name="Shiba T."/>
            <person name="Hattori M."/>
            <person name="Shinagawa H."/>
        </authorList>
    </citation>
    <scope>NUCLEOTIDE SEQUENCE [LARGE SCALE GENOMIC DNA]</scope>
    <source>
        <strain>O157:H7 / Sakai / RIMD 0509952 / EHEC</strain>
    </source>
</reference>
<evidence type="ECO:0000250" key="1"/>
<evidence type="ECO:0000255" key="2">
    <source>
        <dbReference type="PROSITE-ProRule" id="PRU10014"/>
    </source>
</evidence>
<evidence type="ECO:0000305" key="3"/>
<organism>
    <name type="scientific">Escherichia coli O157:H7</name>
    <dbReference type="NCBI Taxonomy" id="83334"/>
    <lineage>
        <taxon>Bacteria</taxon>
        <taxon>Pseudomonadati</taxon>
        <taxon>Pseudomonadota</taxon>
        <taxon>Gammaproteobacteria</taxon>
        <taxon>Enterobacterales</taxon>
        <taxon>Enterobacteriaceae</taxon>
        <taxon>Escherichia</taxon>
    </lineage>
</organism>
<comment type="function">
    <text>Provides the precursors necessary for DNA synthesis. Catalyzes the biosynthesis of deoxyribonucleotides from the corresponding ribonucleotides. R2 contains the tyrosyl radical required for catalysis.</text>
</comment>
<comment type="catalytic activity">
    <reaction evidence="2">
        <text>a 2'-deoxyribonucleoside 5'-diphosphate + [thioredoxin]-disulfide + H2O = a ribonucleoside 5'-diphosphate + [thioredoxin]-dithiol</text>
        <dbReference type="Rhea" id="RHEA:23252"/>
        <dbReference type="Rhea" id="RHEA-COMP:10698"/>
        <dbReference type="Rhea" id="RHEA-COMP:10700"/>
        <dbReference type="ChEBI" id="CHEBI:15377"/>
        <dbReference type="ChEBI" id="CHEBI:29950"/>
        <dbReference type="ChEBI" id="CHEBI:50058"/>
        <dbReference type="ChEBI" id="CHEBI:57930"/>
        <dbReference type="ChEBI" id="CHEBI:73316"/>
        <dbReference type="EC" id="1.17.4.1"/>
    </reaction>
</comment>
<comment type="cofactor">
    <cofactor>
        <name>Fe cation</name>
        <dbReference type="ChEBI" id="CHEBI:24875"/>
    </cofactor>
    <text>Binds 2 iron ions per subunit.</text>
</comment>
<comment type="subunit">
    <text evidence="1">Tetramer of two alpha (R1) and two beta (R2) subunits. The B1 protein is a dimer of alpha subunits. A radical transfer pathway occurs between Tyr-123 of R2 and R1 (By similarity).</text>
</comment>
<comment type="miscellaneous">
    <text>E.coli produces two separate class I enzymes. This one is the functional enzyme during growth.</text>
</comment>
<comment type="miscellaneous">
    <text evidence="1">A substrate-binding catalytic site, located on R1, is formed only in the presence of the second subunit R2.</text>
</comment>
<comment type="similarity">
    <text evidence="3">Belongs to the ribonucleoside diphosphate reductase small chain family.</text>
</comment>
<dbReference type="EC" id="1.17.4.1"/>
<dbReference type="EMBL" id="AE005174">
    <property type="protein sequence ID" value="AAG57364.1"/>
    <property type="molecule type" value="Genomic_DNA"/>
</dbReference>
<dbReference type="EMBL" id="BA000007">
    <property type="protein sequence ID" value="BAB36541.1"/>
    <property type="molecule type" value="Genomic_DNA"/>
</dbReference>
<dbReference type="PIR" id="F91018">
    <property type="entry name" value="F91018"/>
</dbReference>
<dbReference type="PIR" id="H85862">
    <property type="entry name" value="H85862"/>
</dbReference>
<dbReference type="RefSeq" id="NP_311145.1">
    <property type="nucleotide sequence ID" value="NC_002695.1"/>
</dbReference>
<dbReference type="RefSeq" id="WP_000332037.1">
    <property type="nucleotide sequence ID" value="NZ_VOAI01000001.1"/>
</dbReference>
<dbReference type="SMR" id="P69925"/>
<dbReference type="STRING" id="155864.Z3491"/>
<dbReference type="GeneID" id="75058011"/>
<dbReference type="GeneID" id="916826"/>
<dbReference type="KEGG" id="ece:Z3491"/>
<dbReference type="KEGG" id="ecs:ECs_3118"/>
<dbReference type="PATRIC" id="fig|386585.9.peg.3252"/>
<dbReference type="eggNOG" id="COG0208">
    <property type="taxonomic scope" value="Bacteria"/>
</dbReference>
<dbReference type="HOGENOM" id="CLU_062403_0_0_6"/>
<dbReference type="OMA" id="LEPMFLG"/>
<dbReference type="Proteomes" id="UP000000558">
    <property type="component" value="Chromosome"/>
</dbReference>
<dbReference type="Proteomes" id="UP000002519">
    <property type="component" value="Chromosome"/>
</dbReference>
<dbReference type="GO" id="GO:0046872">
    <property type="term" value="F:metal ion binding"/>
    <property type="evidence" value="ECO:0007669"/>
    <property type="project" value="UniProtKB-KW"/>
</dbReference>
<dbReference type="GO" id="GO:0004748">
    <property type="term" value="F:ribonucleoside-diphosphate reductase activity, thioredoxin disulfide as acceptor"/>
    <property type="evidence" value="ECO:0007669"/>
    <property type="project" value="UniProtKB-EC"/>
</dbReference>
<dbReference type="GO" id="GO:0009263">
    <property type="term" value="P:deoxyribonucleotide biosynthetic process"/>
    <property type="evidence" value="ECO:0007669"/>
    <property type="project" value="UniProtKB-KW"/>
</dbReference>
<dbReference type="CDD" id="cd01049">
    <property type="entry name" value="RNRR2"/>
    <property type="match status" value="1"/>
</dbReference>
<dbReference type="FunFam" id="1.10.620.20:FF:000001">
    <property type="entry name" value="Ribonucleoside-diphosphate reductase 1 subunit beta"/>
    <property type="match status" value="1"/>
</dbReference>
<dbReference type="Gene3D" id="1.10.620.20">
    <property type="entry name" value="Ribonucleotide Reductase, subunit A"/>
    <property type="match status" value="1"/>
</dbReference>
<dbReference type="InterPro" id="IPR009078">
    <property type="entry name" value="Ferritin-like_SF"/>
</dbReference>
<dbReference type="InterPro" id="IPR012348">
    <property type="entry name" value="RNR-like"/>
</dbReference>
<dbReference type="InterPro" id="IPR033909">
    <property type="entry name" value="RNR_small"/>
</dbReference>
<dbReference type="InterPro" id="IPR030475">
    <property type="entry name" value="RNR_small_AS"/>
</dbReference>
<dbReference type="InterPro" id="IPR000358">
    <property type="entry name" value="RNR_small_fam"/>
</dbReference>
<dbReference type="NCBIfam" id="NF006576">
    <property type="entry name" value="PRK09101.1"/>
    <property type="match status" value="1"/>
</dbReference>
<dbReference type="PANTHER" id="PTHR23409">
    <property type="entry name" value="RIBONUCLEOSIDE-DIPHOSPHATE REDUCTASE SMALL CHAIN"/>
    <property type="match status" value="1"/>
</dbReference>
<dbReference type="PANTHER" id="PTHR23409:SF18">
    <property type="entry name" value="RIBONUCLEOSIDE-DIPHOSPHATE REDUCTASE SUBUNIT M2"/>
    <property type="match status" value="1"/>
</dbReference>
<dbReference type="Pfam" id="PF00268">
    <property type="entry name" value="Ribonuc_red_sm"/>
    <property type="match status" value="1"/>
</dbReference>
<dbReference type="SUPFAM" id="SSF47240">
    <property type="entry name" value="Ferritin-like"/>
    <property type="match status" value="1"/>
</dbReference>
<dbReference type="PROSITE" id="PS00368">
    <property type="entry name" value="RIBORED_SMALL"/>
    <property type="match status" value="1"/>
</dbReference>
<sequence length="376" mass="43517">MAYTTFSQTKNDQLKEPMFFGQPVNVARYDQQKYDIFEKLIEKQLSFFWRPEEVDVSRDRIDYQALPEHEKHIFISNLKYQTLLDSIQGRSPNVALLPLISIPELETWVETWAFSETIHSRSYTHIIRNIVNDPSVVFDDIVTNEQIQKRAEGISSYYDELIEMTSYWHLLGEGTHTVNGKTVTVSLRELKKKLYLCLMSVNALEAIRFYVSFACSFAFAERELMEGNAKIIRLIARDEALHLTGTQHMLNLLRSGADDPEMAEIAEECKQECYDLFVQAAQQEKDWADYLFRDGSMIGLNKDILCQYVEYITNIRMQAVGLDLPFQTRSNPIPWINTWLVSDNVQVAPQEVEVSSYLVGQIDSEVDTDDLSNFQL</sequence>